<reference key="1">
    <citation type="journal article" date="2000" name="Nucleic Acids Res.">
        <title>Complete genome sequence of the alkaliphilic bacterium Bacillus halodurans and genomic sequence comparison with Bacillus subtilis.</title>
        <authorList>
            <person name="Takami H."/>
            <person name="Nakasone K."/>
            <person name="Takaki Y."/>
            <person name="Maeno G."/>
            <person name="Sasaki R."/>
            <person name="Masui N."/>
            <person name="Fuji F."/>
            <person name="Hirama C."/>
            <person name="Nakamura Y."/>
            <person name="Ogasawara N."/>
            <person name="Kuhara S."/>
            <person name="Horikoshi K."/>
        </authorList>
    </citation>
    <scope>NUCLEOTIDE SEQUENCE [LARGE SCALE GENOMIC DNA]</scope>
    <source>
        <strain>ATCC BAA-125 / DSM 18197 / FERM 7344 / JCM 9153 / C-125</strain>
    </source>
</reference>
<keyword id="KW-1185">Reference proteome</keyword>
<keyword id="KW-0677">Repeat</keyword>
<keyword id="KW-0802">TPR repeat</keyword>
<sequence>MNKLEERSQHRKSRFRFLVISTFWRVLLLLKNDAEPLFHLGNIHYAYGHKASAMNYWKEAVSKNREHEKAWHNLVQCAVIQEEWEQAAEGLTILCRNHPTRFEYMSLYTHALKKLGKKEELEEWYLSHINGPHHEWAIEGLGMLYIRTRREIDAFKLLSPFVRKFPNRPVGLKILGISSIRTNQYEAGLTFLEKSLELKEDKEVKSLVDRVKRLKKVRGGNR</sequence>
<feature type="chain" id="PRO_0000106449" description="TPR repeat-containing protein BH2049">
    <location>
        <begin position="1"/>
        <end position="222"/>
    </location>
</feature>
<feature type="repeat" description="TPR 1">
    <location>
        <begin position="34"/>
        <end position="67"/>
    </location>
</feature>
<feature type="repeat" description="TPR 2">
    <location>
        <begin position="169"/>
        <end position="202"/>
    </location>
</feature>
<name>Y2049_HALH5</name>
<accession>Q9KB79</accession>
<proteinExistence type="predicted"/>
<gene>
    <name type="ordered locus">BH2049</name>
</gene>
<protein>
    <recommendedName>
        <fullName>TPR repeat-containing protein BH2049</fullName>
    </recommendedName>
</protein>
<organism>
    <name type="scientific">Halalkalibacterium halodurans (strain ATCC BAA-125 / DSM 18197 / FERM 7344 / JCM 9153 / C-125)</name>
    <name type="common">Bacillus halodurans</name>
    <dbReference type="NCBI Taxonomy" id="272558"/>
    <lineage>
        <taxon>Bacteria</taxon>
        <taxon>Bacillati</taxon>
        <taxon>Bacillota</taxon>
        <taxon>Bacilli</taxon>
        <taxon>Bacillales</taxon>
        <taxon>Bacillaceae</taxon>
        <taxon>Halalkalibacterium (ex Joshi et al. 2022)</taxon>
    </lineage>
</organism>
<dbReference type="EMBL" id="BA000004">
    <property type="protein sequence ID" value="BAB05768.1"/>
    <property type="molecule type" value="Genomic_DNA"/>
</dbReference>
<dbReference type="PIR" id="A83906">
    <property type="entry name" value="A83906"/>
</dbReference>
<dbReference type="RefSeq" id="WP_010898207.1">
    <property type="nucleotide sequence ID" value="NC_002570.2"/>
</dbReference>
<dbReference type="SMR" id="Q9KB79"/>
<dbReference type="STRING" id="272558.gene:10727947"/>
<dbReference type="KEGG" id="bha:BH2049"/>
<dbReference type="eggNOG" id="COG0457">
    <property type="taxonomic scope" value="Bacteria"/>
</dbReference>
<dbReference type="HOGENOM" id="CLU_1243273_0_0_9"/>
<dbReference type="OrthoDB" id="9807628at2"/>
<dbReference type="Proteomes" id="UP000001258">
    <property type="component" value="Chromosome"/>
</dbReference>
<dbReference type="Gene3D" id="1.25.40.10">
    <property type="entry name" value="Tetratricopeptide repeat domain"/>
    <property type="match status" value="1"/>
</dbReference>
<dbReference type="InterPro" id="IPR011990">
    <property type="entry name" value="TPR-like_helical_dom_sf"/>
</dbReference>
<dbReference type="InterPro" id="IPR019734">
    <property type="entry name" value="TPR_rpt"/>
</dbReference>
<dbReference type="SMART" id="SM00028">
    <property type="entry name" value="TPR"/>
    <property type="match status" value="2"/>
</dbReference>
<dbReference type="SUPFAM" id="SSF48452">
    <property type="entry name" value="TPR-like"/>
    <property type="match status" value="1"/>
</dbReference>
<dbReference type="PROSITE" id="PS50293">
    <property type="entry name" value="TPR_REGION"/>
    <property type="match status" value="1"/>
</dbReference>